<accession>O82318</accession>
<accession>Q42355</accession>
<name>SKM1_ARATH</name>
<comment type="function">
    <text evidence="6 10 11">Receptor with a serine/threonine-protein kinase activity (By similarity). Together with SKM2, LRR-rich receptor-like kinase (LRR-RLK) required for male fertility by the perception of CLE43 and CLE45 peptides and the transduction of their promoting action in pollen tubes, especially under relatively high temperature (at 30 degrees Celsius), thus conferring tolerance against high temperature probably through the maintenance of mitochondrial activity (PubMed:23910659). Seems to not be involved in the perception of CLE45 peptide in roots (PubMed:27354416).</text>
</comment>
<comment type="catalytic activity">
    <reaction evidence="13">
        <text>L-seryl-[protein] + ATP = O-phospho-L-seryl-[protein] + ADP + H(+)</text>
        <dbReference type="Rhea" id="RHEA:17989"/>
        <dbReference type="Rhea" id="RHEA-COMP:9863"/>
        <dbReference type="Rhea" id="RHEA-COMP:11604"/>
        <dbReference type="ChEBI" id="CHEBI:15378"/>
        <dbReference type="ChEBI" id="CHEBI:29999"/>
        <dbReference type="ChEBI" id="CHEBI:30616"/>
        <dbReference type="ChEBI" id="CHEBI:83421"/>
        <dbReference type="ChEBI" id="CHEBI:456216"/>
        <dbReference type="EC" id="2.7.11.1"/>
    </reaction>
</comment>
<comment type="catalytic activity">
    <reaction evidence="13">
        <text>L-threonyl-[protein] + ATP = O-phospho-L-threonyl-[protein] + ADP + H(+)</text>
        <dbReference type="Rhea" id="RHEA:46608"/>
        <dbReference type="Rhea" id="RHEA-COMP:11060"/>
        <dbReference type="Rhea" id="RHEA-COMP:11605"/>
        <dbReference type="ChEBI" id="CHEBI:15378"/>
        <dbReference type="ChEBI" id="CHEBI:30013"/>
        <dbReference type="ChEBI" id="CHEBI:30616"/>
        <dbReference type="ChEBI" id="CHEBI:61977"/>
        <dbReference type="ChEBI" id="CHEBI:456216"/>
        <dbReference type="EC" id="2.7.11.1"/>
    </reaction>
</comment>
<comment type="subunit">
    <text evidence="5 10">Self-interacts (By similarity). Binds to CLE45 present in the pistil, particularly under relatively high temperature (at 30 degrees Celsius) (PubMed:23910659).</text>
</comment>
<comment type="interaction">
    <interactant intactId="EBI-20661246">
        <id>O82318</id>
    </interactant>
    <interactant intactId="EBI-20651541">
        <id>C0LGJ9</id>
        <label>At2g02780</label>
    </interactant>
    <organismsDiffer>false</organismsDiffer>
    <experiments>2</experiments>
</comment>
<comment type="subcellular location">
    <subcellularLocation>
        <location evidence="5">Cell membrane</location>
        <topology evidence="7">Single-pass type I membrane protein</topology>
    </subcellularLocation>
</comment>
<comment type="tissue specificity">
    <text evidence="10 11">Expressed in pollen grains and roots vascular tissues (PubMed:23910659). Present in roots (PubMed:27354416).</text>
</comment>
<comment type="developmental stage">
    <text evidence="11">In roots, restricted to the mature vasculature but absent from the meristem.</text>
</comment>
<comment type="disruption phenotype">
    <text evidence="10">Insensitivity of pollen tubes to CLE43 and, partially, to CLE45 peptides-mediated growth stimulation (PubMed:23910659). Pollen tubes of plants missing both SKM1 and SKM2 are fully insensitive to CLE45 peptides (PubMed:23910659). Reduced seed production at 30 degrees Celsius, but not at 22 degrees Celsius (PubMed:23910659).</text>
</comment>
<comment type="similarity">
    <text evidence="8">Belongs to the protein kinase superfamily. Ser/Thr protein kinase family.</text>
</comment>
<comment type="sequence caution" evidence="13">
    <conflict type="frameshift">
        <sequence resource="EMBL-CDS" id="CAA23395"/>
    </conflict>
</comment>
<feature type="signal peptide" evidence="7">
    <location>
        <begin position="1"/>
        <end position="29"/>
    </location>
</feature>
<feature type="chain" id="PRO_0000389454" description="Leucine-rich repeat receptor-like serine/threonine-protein kinase SKM1">
    <location>
        <begin position="30"/>
        <end position="960"/>
    </location>
</feature>
<feature type="topological domain" description="Extracellular" evidence="13">
    <location>
        <begin position="30"/>
        <end position="634"/>
    </location>
</feature>
<feature type="transmembrane region" description="Helical" evidence="7">
    <location>
        <begin position="635"/>
        <end position="655"/>
    </location>
</feature>
<feature type="topological domain" description="Cytoplasmic" evidence="13">
    <location>
        <begin position="656"/>
        <end position="960"/>
    </location>
</feature>
<feature type="repeat" description="LRR 1" evidence="7">
    <location>
        <begin position="71"/>
        <end position="96"/>
    </location>
</feature>
<feature type="repeat" description="LRR 2" evidence="7">
    <location>
        <begin position="97"/>
        <end position="120"/>
    </location>
</feature>
<feature type="repeat" description="LRR 3" evidence="7">
    <location>
        <begin position="122"/>
        <end position="146"/>
    </location>
</feature>
<feature type="repeat" description="LRR 4" evidence="7">
    <location>
        <begin position="149"/>
        <end position="168"/>
    </location>
</feature>
<feature type="repeat" description="LRR 5" evidence="7">
    <location>
        <begin position="169"/>
        <end position="194"/>
    </location>
</feature>
<feature type="repeat" description="LRR 6" evidence="7">
    <location>
        <begin position="196"/>
        <end position="216"/>
    </location>
</feature>
<feature type="repeat" description="LRR 7" evidence="7">
    <location>
        <begin position="217"/>
        <end position="240"/>
    </location>
</feature>
<feature type="repeat" description="LRR 8" evidence="7">
    <location>
        <begin position="241"/>
        <end position="264"/>
    </location>
</feature>
<feature type="repeat" description="LRR 9" evidence="7">
    <location>
        <begin position="265"/>
        <end position="288"/>
    </location>
</feature>
<feature type="repeat" description="LRR 10" evidence="7">
    <location>
        <begin position="290"/>
        <end position="312"/>
    </location>
</feature>
<feature type="repeat" description="LRR 11" evidence="7">
    <location>
        <begin position="313"/>
        <end position="336"/>
    </location>
</feature>
<feature type="repeat" description="LRR 12" evidence="7">
    <location>
        <begin position="338"/>
        <end position="360"/>
    </location>
</feature>
<feature type="repeat" description="LRR 13" evidence="7">
    <location>
        <begin position="361"/>
        <end position="384"/>
    </location>
</feature>
<feature type="repeat" description="LRR 14" evidence="7">
    <location>
        <begin position="386"/>
        <end position="408"/>
    </location>
</feature>
<feature type="repeat" description="LRR 15" evidence="7">
    <location>
        <begin position="409"/>
        <end position="432"/>
    </location>
</feature>
<feature type="repeat" description="LRR 16" evidence="7">
    <location>
        <begin position="434"/>
        <end position="454"/>
    </location>
</feature>
<feature type="repeat" description="LRR 17" evidence="7">
    <location>
        <begin position="455"/>
        <end position="477"/>
    </location>
</feature>
<feature type="repeat" description="LRR 18" evidence="7">
    <location>
        <begin position="478"/>
        <end position="501"/>
    </location>
</feature>
<feature type="repeat" description="LRR 19" evidence="7">
    <location>
        <begin position="503"/>
        <end position="525"/>
    </location>
</feature>
<feature type="repeat" description="LRR 20" evidence="7">
    <location>
        <begin position="526"/>
        <end position="549"/>
    </location>
</feature>
<feature type="repeat" description="LRR 21" evidence="7">
    <location>
        <begin position="550"/>
        <end position="573"/>
    </location>
</feature>
<feature type="repeat" description="LRR 22" evidence="7">
    <location>
        <begin position="575"/>
        <end position="598"/>
    </location>
</feature>
<feature type="domain" description="Protein kinase" evidence="8">
    <location>
        <begin position="691"/>
        <end position="953"/>
    </location>
</feature>
<feature type="short sequence motif" description="CLE45 peptide binding" evidence="3">
    <location>
        <begin position="221"/>
        <end position="226"/>
    </location>
</feature>
<feature type="binding site" evidence="8">
    <location>
        <begin position="697"/>
        <end position="705"/>
    </location>
    <ligand>
        <name>ATP</name>
        <dbReference type="ChEBI" id="CHEBI:30616"/>
    </ligand>
</feature>
<feature type="binding site" evidence="8">
    <location>
        <position position="717"/>
    </location>
    <ligand>
        <name>ATP</name>
        <dbReference type="ChEBI" id="CHEBI:30616"/>
    </ligand>
</feature>
<feature type="modified residue" description="Phosphothreonine" evidence="2">
    <location>
        <position position="692"/>
    </location>
</feature>
<feature type="modified residue" description="Phosphotyrosine" evidence="1">
    <location>
        <position position="834"/>
    </location>
</feature>
<feature type="glycosylation site" description="N-linked (GlcNAc...) asparagine" evidence="9">
    <location>
        <position position="70"/>
    </location>
</feature>
<feature type="glycosylation site" description="N-linked (GlcNAc...) asparagine" evidence="9">
    <location>
        <position position="83"/>
    </location>
</feature>
<feature type="glycosylation site" description="N-linked (GlcNAc...) asparagine" evidence="9">
    <location>
        <position position="103"/>
    </location>
</feature>
<feature type="glycosylation site" description="N-linked (GlcNAc...) asparagine" evidence="9">
    <location>
        <position position="108"/>
    </location>
</feature>
<feature type="glycosylation site" description="N-linked (GlcNAc...) asparagine" evidence="9">
    <location>
        <position position="129"/>
    </location>
</feature>
<feature type="glycosylation site" description="N-linked (GlcNAc...) asparagine" evidence="9">
    <location>
        <position position="134"/>
    </location>
</feature>
<feature type="glycosylation site" description="N-linked (GlcNAc...) asparagine" evidence="9">
    <location>
        <position position="191"/>
    </location>
</feature>
<feature type="glycosylation site" description="N-linked (GlcNAc...) asparagine" evidence="9">
    <location>
        <position position="228"/>
    </location>
</feature>
<feature type="glycosylation site" description="N-linked (GlcNAc...) asparagine" evidence="9">
    <location>
        <position position="252"/>
    </location>
</feature>
<feature type="glycosylation site" description="N-linked (GlcNAc...) asparagine" evidence="9">
    <location>
        <position position="324"/>
    </location>
</feature>
<feature type="glycosylation site" description="N-linked (GlcNAc...) asparagine" evidence="9">
    <location>
        <position position="362"/>
    </location>
</feature>
<feature type="glycosylation site" description="N-linked (GlcNAc...) asparagine" evidence="9">
    <location>
        <position position="372"/>
    </location>
</feature>
<feature type="glycosylation site" description="N-linked (GlcNAc...) asparagine" evidence="9">
    <location>
        <position position="537"/>
    </location>
</feature>
<feature type="glycosylation site" description="N-linked (GlcNAc...) asparagine" evidence="9">
    <location>
        <position position="580"/>
    </location>
</feature>
<feature type="glycosylation site" description="N-linked (GlcNAc...) asparagine" evidence="9">
    <location>
        <position position="600"/>
    </location>
</feature>
<feature type="disulfide bond" evidence="4">
    <location>
        <begin position="61"/>
        <end position="68"/>
    </location>
</feature>
<feature type="mutagenesis site" description="In KDSKM1; lost kinase activity (kinase-dead). High-temperature exposure (HTE) mediated reduction in seeds number." evidence="10">
    <original>K</original>
    <variation>E</variation>
    <location>
        <position position="717"/>
    </location>
</feature>
<gene>
    <name evidence="12" type="primary">SKM1</name>
    <name evidence="14" type="ordered locus">At2g25790</name>
    <name evidence="15" type="ORF">F17H15.18</name>
</gene>
<sequence>MSTSHHHHHPPYLITTLFFLFLNFSCLHANELELLLSFKSSIQDPLKHLSSWSYSSTNDVCLWSGVVCNNISRVVSLDLSGKNMSGQILTAATFRLPFLQTINLSNNNLSGPIPHDIFTTSSPSLRYLNLSNNNFSGSIPRGFLPNLYTLDLSNNMFTGEIYNDIGVFSNLRVLDLGGNVLTGHVPGYLGNLSRLEFLTLASNQLTGGVPVELGKMKNLKWIYLGYNNLSGEIPYQIGGLSSLNHLDLVYNNLSGPIPPSLGDLKKLEYMFLYQNKLSGQIPPSIFSLQNLISLDFSDNSLSGEIPELVAQMQSLEILHLFSNNLTGKIPEGVTSLPRLKVLQLWSNRFSGGIPANLGKHNNLTVLDLSTNNLTGKLPDTLCDSGHLTKLILFSNSLDSQIPPSLGMCQSLERVRLQNNGFSGKLPRGFTKLQLVNFLDLSNNNLQGNINTWDMPQLEMLDLSVNKFFGELPDFSRSKRLKKLDLSRNKISGVVPQGLMTFPEIMDLDLSENEITGVIPRELSSCKNLVNLDLSHNNFTGEIPSSFAEFQVLSDLDLSCNQLSGEIPKNLGNIESLVQVNISHNLLHGSLPFTGAFLAINATAVEGNIDLCSENSASGLRPCKVVRKRSTKSWWLIITSTFAAFLAVLVSGFFIVLVFQRTHNVLEVKKVEQEDGTKWETQFFDSKFMKSFTVNTILSSLKDQNVLVDKNGVHFVVKEVKKYDSLPEMISDMRKLSDHKNILKIVATCRSETVAYLIHEDVEGKRLSQVLSGLSWERRRKIMKGIVEALRFLHCRCSPAVVAGNLSPENIVIDVTDEPRLCLGLPGLLCMDAAYMAPETREHKEMTSKSDIYGFGILLLHLLTGKCSSSNEDIESGVNGSLVKWARYSYSNCHIDTWIDSSIDTSVHQREIVHVMNLALKCTAIDPQERPCTNNVLQALESTSSSSSSCTTYLSKILSLA</sequence>
<organism>
    <name type="scientific">Arabidopsis thaliana</name>
    <name type="common">Mouse-ear cress</name>
    <dbReference type="NCBI Taxonomy" id="3702"/>
    <lineage>
        <taxon>Eukaryota</taxon>
        <taxon>Viridiplantae</taxon>
        <taxon>Streptophyta</taxon>
        <taxon>Embryophyta</taxon>
        <taxon>Tracheophyta</taxon>
        <taxon>Spermatophyta</taxon>
        <taxon>Magnoliopsida</taxon>
        <taxon>eudicotyledons</taxon>
        <taxon>Gunneridae</taxon>
        <taxon>Pentapetalae</taxon>
        <taxon>rosids</taxon>
        <taxon>malvids</taxon>
        <taxon>Brassicales</taxon>
        <taxon>Brassicaceae</taxon>
        <taxon>Camelineae</taxon>
        <taxon>Arabidopsis</taxon>
    </lineage>
</organism>
<keyword id="KW-0067">ATP-binding</keyword>
<keyword id="KW-1003">Cell membrane</keyword>
<keyword id="KW-1015">Disulfide bond</keyword>
<keyword id="KW-0325">Glycoprotein</keyword>
<keyword id="KW-0433">Leucine-rich repeat</keyword>
<keyword id="KW-0472">Membrane</keyword>
<keyword id="KW-0547">Nucleotide-binding</keyword>
<keyword id="KW-0597">Phosphoprotein</keyword>
<keyword id="KW-0675">Receptor</keyword>
<keyword id="KW-1185">Reference proteome</keyword>
<keyword id="KW-0677">Repeat</keyword>
<keyword id="KW-0732">Signal</keyword>
<keyword id="KW-0808">Transferase</keyword>
<keyword id="KW-0812">Transmembrane</keyword>
<keyword id="KW-1133">Transmembrane helix</keyword>
<evidence type="ECO:0000250" key="1">
    <source>
        <dbReference type="UniProtKB" id="C0LGT6"/>
    </source>
</evidence>
<evidence type="ECO:0000250" key="2">
    <source>
        <dbReference type="UniProtKB" id="O22476"/>
    </source>
</evidence>
<evidence type="ECO:0000250" key="3">
    <source>
        <dbReference type="UniProtKB" id="O65440"/>
    </source>
</evidence>
<evidence type="ECO:0000250" key="4">
    <source>
        <dbReference type="UniProtKB" id="Q94AG2"/>
    </source>
</evidence>
<evidence type="ECO:0000250" key="5">
    <source>
        <dbReference type="UniProtKB" id="Q9SYQ8"/>
    </source>
</evidence>
<evidence type="ECO:0000250" key="6">
    <source>
        <dbReference type="UniProtKB" id="Q9ZWC8"/>
    </source>
</evidence>
<evidence type="ECO:0000255" key="7"/>
<evidence type="ECO:0000255" key="8">
    <source>
        <dbReference type="PROSITE-ProRule" id="PRU00159"/>
    </source>
</evidence>
<evidence type="ECO:0000255" key="9">
    <source>
        <dbReference type="PROSITE-ProRule" id="PRU00498"/>
    </source>
</evidence>
<evidence type="ECO:0000269" key="10">
    <source>
    </source>
</evidence>
<evidence type="ECO:0000269" key="11">
    <source>
    </source>
</evidence>
<evidence type="ECO:0000303" key="12">
    <source>
    </source>
</evidence>
<evidence type="ECO:0000305" key="13"/>
<evidence type="ECO:0000312" key="14">
    <source>
        <dbReference type="Araport" id="AT2G25790"/>
    </source>
</evidence>
<evidence type="ECO:0000312" key="15">
    <source>
        <dbReference type="EMBL" id="AAC42251.1"/>
    </source>
</evidence>
<proteinExistence type="evidence at protein level"/>
<protein>
    <recommendedName>
        <fullName evidence="13">Leucine-rich repeat receptor-like serine/threonine-protein kinase SKM1</fullName>
        <ecNumber evidence="13">2.7.11.1</ecNumber>
    </recommendedName>
    <alternativeName>
        <fullName evidence="12">Protein STERILITY-REGULATING KINASE MEMBER 1</fullName>
    </alternativeName>
</protein>
<reference key="1">
    <citation type="journal article" date="1999" name="Nature">
        <title>Sequence and analysis of chromosome 2 of the plant Arabidopsis thaliana.</title>
        <authorList>
            <person name="Lin X."/>
            <person name="Kaul S."/>
            <person name="Rounsley S.D."/>
            <person name="Shea T.P."/>
            <person name="Benito M.-I."/>
            <person name="Town C.D."/>
            <person name="Fujii C.Y."/>
            <person name="Mason T.M."/>
            <person name="Bowman C.L."/>
            <person name="Barnstead M.E."/>
            <person name="Feldblyum T.V."/>
            <person name="Buell C.R."/>
            <person name="Ketchum K.A."/>
            <person name="Lee J.J."/>
            <person name="Ronning C.M."/>
            <person name="Koo H.L."/>
            <person name="Moffat K.S."/>
            <person name="Cronin L.A."/>
            <person name="Shen M."/>
            <person name="Pai G."/>
            <person name="Van Aken S."/>
            <person name="Umayam L."/>
            <person name="Tallon L.J."/>
            <person name="Gill J.E."/>
            <person name="Adams M.D."/>
            <person name="Carrera A.J."/>
            <person name="Creasy T.H."/>
            <person name="Goodman H.M."/>
            <person name="Somerville C.R."/>
            <person name="Copenhaver G.P."/>
            <person name="Preuss D."/>
            <person name="Nierman W.C."/>
            <person name="White O."/>
            <person name="Eisen J.A."/>
            <person name="Salzberg S.L."/>
            <person name="Fraser C.M."/>
            <person name="Venter J.C."/>
        </authorList>
    </citation>
    <scope>NUCLEOTIDE SEQUENCE [LARGE SCALE GENOMIC DNA]</scope>
    <source>
        <strain>cv. Columbia</strain>
    </source>
</reference>
<reference key="2">
    <citation type="journal article" date="2017" name="Plant J.">
        <title>Araport11: a complete reannotation of the Arabidopsis thaliana reference genome.</title>
        <authorList>
            <person name="Cheng C.Y."/>
            <person name="Krishnakumar V."/>
            <person name="Chan A.P."/>
            <person name="Thibaud-Nissen F."/>
            <person name="Schobel S."/>
            <person name="Town C.D."/>
        </authorList>
    </citation>
    <scope>GENOME REANNOTATION</scope>
    <source>
        <strain>cv. Columbia</strain>
    </source>
</reference>
<reference key="3">
    <citation type="journal article" date="2010" name="BMC Genomics">
        <title>Genome-wide cloning and sequence analysis of leucine-rich repeat receptor-like protein kinase genes in Arabidopsis thaliana.</title>
        <authorList>
            <person name="Gou X."/>
            <person name="He K."/>
            <person name="Yang H."/>
            <person name="Yuan T."/>
            <person name="Lin H."/>
            <person name="Clouse S.D."/>
            <person name="Li J."/>
        </authorList>
    </citation>
    <scope>NUCLEOTIDE SEQUENCE [LARGE SCALE MRNA]</scope>
    <source>
        <strain>cv. Columbia</strain>
    </source>
</reference>
<reference key="4">
    <citation type="submission" date="1996-03" db="EMBL/GenBank/DDBJ databases">
        <title>The Arabidopsis thaliana transcribed genome: the GDR cDNA program.</title>
        <authorList>
            <person name="Cooke R."/>
            <person name="Laudie M."/>
            <person name="Raynal M."/>
            <person name="Delseny M."/>
        </authorList>
    </citation>
    <scope>NUCLEOTIDE SEQUENCE [LARGE SCALE MRNA] OF 1-126</scope>
    <source>
        <strain>cv. Columbia</strain>
        <tissue>Protoplast</tissue>
    </source>
</reference>
<reference key="5">
    <citation type="journal article" date="2013" name="Curr. Biol.">
        <title>A novel pollen-pistil interaction conferring high-temperature tolerance during reproduction via CLE45 signaling.</title>
        <authorList>
            <person name="Endo S."/>
            <person name="Shinohara H."/>
            <person name="Matsubayashi Y."/>
            <person name="Fukuda H."/>
        </authorList>
    </citation>
    <scope>FUNCTION</scope>
    <scope>MUTAGENESIS OF LYS-717</scope>
    <scope>DISRUPTION PHENOTYPE</scope>
    <scope>INTERACTION WITH CLE45</scope>
    <scope>TISSUE SPECIFICITY</scope>
</reference>
<reference key="6">
    <citation type="journal article" date="2016" name="EMBO Rep.">
        <title>Arabidopsis MAKR5 is a positive effector of BAM3-dependent CLE45 signaling.</title>
        <authorList>
            <person name="Kang Y.H."/>
            <person name="Hardtke C.S."/>
        </authorList>
    </citation>
    <scope>FUNCTION</scope>
    <scope>TISSUE SPECIFICITY</scope>
    <scope>DEVELOPMENTAL STAGE</scope>
    <source>
        <strain>cv. Columbia</strain>
    </source>
</reference>
<dbReference type="EC" id="2.7.11.1" evidence="13"/>
<dbReference type="EMBL" id="AC005395">
    <property type="protein sequence ID" value="AAC42251.1"/>
    <property type="molecule type" value="Genomic_DNA"/>
</dbReference>
<dbReference type="EMBL" id="CP002685">
    <property type="protein sequence ID" value="AEC07753.1"/>
    <property type="molecule type" value="Genomic_DNA"/>
</dbReference>
<dbReference type="EMBL" id="FJ708700">
    <property type="protein sequence ID" value="ACN59295.1"/>
    <property type="molecule type" value="mRNA"/>
</dbReference>
<dbReference type="EMBL" id="F20108">
    <property type="protein sequence ID" value="CAA23395.1"/>
    <property type="status" value="ALT_FRAME"/>
    <property type="molecule type" value="mRNA"/>
</dbReference>
<dbReference type="PIR" id="G84652">
    <property type="entry name" value="G84652"/>
</dbReference>
<dbReference type="RefSeq" id="NP_180150.1">
    <property type="nucleotide sequence ID" value="NM_128139.3"/>
</dbReference>
<dbReference type="SMR" id="O82318"/>
<dbReference type="BioGRID" id="2473">
    <property type="interactions" value="29"/>
</dbReference>
<dbReference type="FunCoup" id="O82318">
    <property type="interactions" value="192"/>
</dbReference>
<dbReference type="IntAct" id="O82318">
    <property type="interactions" value="29"/>
</dbReference>
<dbReference type="STRING" id="3702.O82318"/>
<dbReference type="GlyCosmos" id="O82318">
    <property type="glycosylation" value="15 sites, No reported glycans"/>
</dbReference>
<dbReference type="GlyGen" id="O82318">
    <property type="glycosylation" value="15 sites"/>
</dbReference>
<dbReference type="PaxDb" id="3702-AT2G25790.1"/>
<dbReference type="ProteomicsDB" id="243149"/>
<dbReference type="EnsemblPlants" id="AT2G25790.1">
    <property type="protein sequence ID" value="AT2G25790.1"/>
    <property type="gene ID" value="AT2G25790"/>
</dbReference>
<dbReference type="GeneID" id="817121"/>
<dbReference type="Gramene" id="AT2G25790.1">
    <property type="protein sequence ID" value="AT2G25790.1"/>
    <property type="gene ID" value="AT2G25790"/>
</dbReference>
<dbReference type="KEGG" id="ath:AT2G25790"/>
<dbReference type="Araport" id="AT2G25790"/>
<dbReference type="TAIR" id="AT2G25790">
    <property type="gene designation" value="SKM1"/>
</dbReference>
<dbReference type="eggNOG" id="ENOG502QRRF">
    <property type="taxonomic scope" value="Eukaryota"/>
</dbReference>
<dbReference type="HOGENOM" id="CLU_000288_22_1_1"/>
<dbReference type="InParanoid" id="O82318"/>
<dbReference type="OMA" id="HIDTWID"/>
<dbReference type="PhylomeDB" id="O82318"/>
<dbReference type="PRO" id="PR:O82318"/>
<dbReference type="Proteomes" id="UP000006548">
    <property type="component" value="Chromosome 2"/>
</dbReference>
<dbReference type="ExpressionAtlas" id="O82318">
    <property type="expression patterns" value="baseline and differential"/>
</dbReference>
<dbReference type="GO" id="GO:0005783">
    <property type="term" value="C:endoplasmic reticulum"/>
    <property type="evidence" value="ECO:0007005"/>
    <property type="project" value="TAIR"/>
</dbReference>
<dbReference type="GO" id="GO:0005886">
    <property type="term" value="C:plasma membrane"/>
    <property type="evidence" value="ECO:0007669"/>
    <property type="project" value="UniProtKB-SubCell"/>
</dbReference>
<dbReference type="GO" id="GO:0005524">
    <property type="term" value="F:ATP binding"/>
    <property type="evidence" value="ECO:0007669"/>
    <property type="project" value="UniProtKB-KW"/>
</dbReference>
<dbReference type="GO" id="GO:0042277">
    <property type="term" value="F:peptide binding"/>
    <property type="evidence" value="ECO:0000353"/>
    <property type="project" value="UniProtKB"/>
</dbReference>
<dbReference type="GO" id="GO:0001653">
    <property type="term" value="F:peptide receptor activity"/>
    <property type="evidence" value="ECO:0000315"/>
    <property type="project" value="UniProtKB"/>
</dbReference>
<dbReference type="GO" id="GO:0004674">
    <property type="term" value="F:protein serine/threonine kinase activity"/>
    <property type="evidence" value="ECO:0007669"/>
    <property type="project" value="UniProtKB-EC"/>
</dbReference>
<dbReference type="GO" id="GO:0080092">
    <property type="term" value="P:regulation of pollen tube growth"/>
    <property type="evidence" value="ECO:0000315"/>
    <property type="project" value="UniProtKB"/>
</dbReference>
<dbReference type="GO" id="GO:0009266">
    <property type="term" value="P:response to temperature stimulus"/>
    <property type="evidence" value="ECO:0000315"/>
    <property type="project" value="UniProtKB"/>
</dbReference>
<dbReference type="FunFam" id="3.80.10.10:FF:000275">
    <property type="entry name" value="Leucine-rich repeat receptor-like protein kinase"/>
    <property type="match status" value="1"/>
</dbReference>
<dbReference type="FunFam" id="3.80.10.10:FF:000416">
    <property type="entry name" value="Probable leucine-rich repeat receptor-like protein kinase At5g63930"/>
    <property type="match status" value="1"/>
</dbReference>
<dbReference type="FunFam" id="1.10.510.10:FF:001105">
    <property type="entry name" value="Probably inactive leucine-rich repeat receptor-like protein kinase"/>
    <property type="match status" value="1"/>
</dbReference>
<dbReference type="FunFam" id="3.80.10.10:FF:000726">
    <property type="entry name" value="Probably inactive leucine-rich repeat receptor-like protein kinase"/>
    <property type="match status" value="1"/>
</dbReference>
<dbReference type="Gene3D" id="3.80.10.10">
    <property type="entry name" value="Ribonuclease Inhibitor"/>
    <property type="match status" value="3"/>
</dbReference>
<dbReference type="Gene3D" id="1.10.510.10">
    <property type="entry name" value="Transferase(Phosphotransferase) domain 1"/>
    <property type="match status" value="1"/>
</dbReference>
<dbReference type="InterPro" id="IPR053211">
    <property type="entry name" value="DNA_repair-toleration"/>
</dbReference>
<dbReference type="InterPro" id="IPR011009">
    <property type="entry name" value="Kinase-like_dom_sf"/>
</dbReference>
<dbReference type="InterPro" id="IPR001611">
    <property type="entry name" value="Leu-rich_rpt"/>
</dbReference>
<dbReference type="InterPro" id="IPR003591">
    <property type="entry name" value="Leu-rich_rpt_typical-subtyp"/>
</dbReference>
<dbReference type="InterPro" id="IPR032675">
    <property type="entry name" value="LRR_dom_sf"/>
</dbReference>
<dbReference type="InterPro" id="IPR013210">
    <property type="entry name" value="LRR_N_plant-typ"/>
</dbReference>
<dbReference type="InterPro" id="IPR000719">
    <property type="entry name" value="Prot_kinase_dom"/>
</dbReference>
<dbReference type="PANTHER" id="PTHR48060">
    <property type="entry name" value="DNA DAMAGE-REPAIR/TOLERATION PROTEIN DRT100"/>
    <property type="match status" value="1"/>
</dbReference>
<dbReference type="PANTHER" id="PTHR48060:SF21">
    <property type="entry name" value="L DOMAIN-LIKE PROTEIN"/>
    <property type="match status" value="1"/>
</dbReference>
<dbReference type="Pfam" id="PF00560">
    <property type="entry name" value="LRR_1"/>
    <property type="match status" value="9"/>
</dbReference>
<dbReference type="Pfam" id="PF13855">
    <property type="entry name" value="LRR_8"/>
    <property type="match status" value="3"/>
</dbReference>
<dbReference type="Pfam" id="PF08263">
    <property type="entry name" value="LRRNT_2"/>
    <property type="match status" value="1"/>
</dbReference>
<dbReference type="Pfam" id="PF00069">
    <property type="entry name" value="Pkinase"/>
    <property type="match status" value="1"/>
</dbReference>
<dbReference type="SMART" id="SM00369">
    <property type="entry name" value="LRR_TYP"/>
    <property type="match status" value="9"/>
</dbReference>
<dbReference type="SUPFAM" id="SSF52058">
    <property type="entry name" value="L domain-like"/>
    <property type="match status" value="1"/>
</dbReference>
<dbReference type="SUPFAM" id="SSF56112">
    <property type="entry name" value="Protein kinase-like (PK-like)"/>
    <property type="match status" value="1"/>
</dbReference>
<dbReference type="SUPFAM" id="SSF52047">
    <property type="entry name" value="RNI-like"/>
    <property type="match status" value="1"/>
</dbReference>
<dbReference type="PROSITE" id="PS50011">
    <property type="entry name" value="PROTEIN_KINASE_DOM"/>
    <property type="match status" value="1"/>
</dbReference>